<keyword id="KW-1003">Cell membrane</keyword>
<keyword id="KW-0342">GTP-binding</keyword>
<keyword id="KW-0378">Hydrolase</keyword>
<keyword id="KW-0472">Membrane</keyword>
<keyword id="KW-0547">Nucleotide-binding</keyword>
<keyword id="KW-0648">Protein biosynthesis</keyword>
<evidence type="ECO:0000255" key="1">
    <source>
        <dbReference type="HAMAP-Rule" id="MF_00071"/>
    </source>
</evidence>
<dbReference type="EC" id="3.6.5.n1" evidence="1"/>
<dbReference type="EMBL" id="CP000262">
    <property type="protein sequence ID" value="ABF37877.1"/>
    <property type="molecule type" value="Genomic_DNA"/>
</dbReference>
<dbReference type="SMR" id="Q1J6V6"/>
<dbReference type="KEGG" id="spi:MGAS10750_Spy0927"/>
<dbReference type="HOGENOM" id="CLU_009995_3_3_9"/>
<dbReference type="Proteomes" id="UP000002434">
    <property type="component" value="Chromosome"/>
</dbReference>
<dbReference type="GO" id="GO:0005886">
    <property type="term" value="C:plasma membrane"/>
    <property type="evidence" value="ECO:0007669"/>
    <property type="project" value="UniProtKB-SubCell"/>
</dbReference>
<dbReference type="GO" id="GO:0005525">
    <property type="term" value="F:GTP binding"/>
    <property type="evidence" value="ECO:0007669"/>
    <property type="project" value="UniProtKB-UniRule"/>
</dbReference>
<dbReference type="GO" id="GO:0003924">
    <property type="term" value="F:GTPase activity"/>
    <property type="evidence" value="ECO:0007669"/>
    <property type="project" value="UniProtKB-UniRule"/>
</dbReference>
<dbReference type="GO" id="GO:0043022">
    <property type="term" value="F:ribosome binding"/>
    <property type="evidence" value="ECO:0007669"/>
    <property type="project" value="UniProtKB-UniRule"/>
</dbReference>
<dbReference type="GO" id="GO:0003746">
    <property type="term" value="F:translation elongation factor activity"/>
    <property type="evidence" value="ECO:0007669"/>
    <property type="project" value="UniProtKB-UniRule"/>
</dbReference>
<dbReference type="GO" id="GO:0045727">
    <property type="term" value="P:positive regulation of translation"/>
    <property type="evidence" value="ECO:0007669"/>
    <property type="project" value="UniProtKB-UniRule"/>
</dbReference>
<dbReference type="CDD" id="cd03699">
    <property type="entry name" value="EF4_II"/>
    <property type="match status" value="1"/>
</dbReference>
<dbReference type="CDD" id="cd16260">
    <property type="entry name" value="EF4_III"/>
    <property type="match status" value="1"/>
</dbReference>
<dbReference type="CDD" id="cd01890">
    <property type="entry name" value="LepA"/>
    <property type="match status" value="1"/>
</dbReference>
<dbReference type="CDD" id="cd03709">
    <property type="entry name" value="lepA_C"/>
    <property type="match status" value="1"/>
</dbReference>
<dbReference type="FunFam" id="3.40.50.300:FF:000078">
    <property type="entry name" value="Elongation factor 4"/>
    <property type="match status" value="1"/>
</dbReference>
<dbReference type="FunFam" id="2.40.30.10:FF:000015">
    <property type="entry name" value="Translation factor GUF1, mitochondrial"/>
    <property type="match status" value="1"/>
</dbReference>
<dbReference type="FunFam" id="3.30.70.240:FF:000007">
    <property type="entry name" value="Translation factor GUF1, mitochondrial"/>
    <property type="match status" value="1"/>
</dbReference>
<dbReference type="FunFam" id="3.30.70.2570:FF:000001">
    <property type="entry name" value="Translation factor GUF1, mitochondrial"/>
    <property type="match status" value="1"/>
</dbReference>
<dbReference type="FunFam" id="3.30.70.870:FF:000004">
    <property type="entry name" value="Translation factor GUF1, mitochondrial"/>
    <property type="match status" value="1"/>
</dbReference>
<dbReference type="Gene3D" id="3.30.70.240">
    <property type="match status" value="1"/>
</dbReference>
<dbReference type="Gene3D" id="3.30.70.2570">
    <property type="entry name" value="Elongation factor 4, C-terminal domain"/>
    <property type="match status" value="1"/>
</dbReference>
<dbReference type="Gene3D" id="3.30.70.870">
    <property type="entry name" value="Elongation Factor G (Translational Gtpase), domain 3"/>
    <property type="match status" value="1"/>
</dbReference>
<dbReference type="Gene3D" id="3.40.50.300">
    <property type="entry name" value="P-loop containing nucleotide triphosphate hydrolases"/>
    <property type="match status" value="1"/>
</dbReference>
<dbReference type="Gene3D" id="2.40.30.10">
    <property type="entry name" value="Translation factors"/>
    <property type="match status" value="1"/>
</dbReference>
<dbReference type="HAMAP" id="MF_00071">
    <property type="entry name" value="LepA"/>
    <property type="match status" value="1"/>
</dbReference>
<dbReference type="InterPro" id="IPR006297">
    <property type="entry name" value="EF-4"/>
</dbReference>
<dbReference type="InterPro" id="IPR041095">
    <property type="entry name" value="EFG_II"/>
</dbReference>
<dbReference type="InterPro" id="IPR035647">
    <property type="entry name" value="EFG_III/V"/>
</dbReference>
<dbReference type="InterPro" id="IPR000640">
    <property type="entry name" value="EFG_V-like"/>
</dbReference>
<dbReference type="InterPro" id="IPR004161">
    <property type="entry name" value="EFTu-like_2"/>
</dbReference>
<dbReference type="InterPro" id="IPR031157">
    <property type="entry name" value="G_TR_CS"/>
</dbReference>
<dbReference type="InterPro" id="IPR038363">
    <property type="entry name" value="LepA_C_sf"/>
</dbReference>
<dbReference type="InterPro" id="IPR013842">
    <property type="entry name" value="LepA_CTD"/>
</dbReference>
<dbReference type="InterPro" id="IPR035654">
    <property type="entry name" value="LepA_IV"/>
</dbReference>
<dbReference type="InterPro" id="IPR027417">
    <property type="entry name" value="P-loop_NTPase"/>
</dbReference>
<dbReference type="InterPro" id="IPR005225">
    <property type="entry name" value="Small_GTP-bd"/>
</dbReference>
<dbReference type="InterPro" id="IPR000795">
    <property type="entry name" value="T_Tr_GTP-bd_dom"/>
</dbReference>
<dbReference type="InterPro" id="IPR009000">
    <property type="entry name" value="Transl_B-barrel_sf"/>
</dbReference>
<dbReference type="NCBIfam" id="TIGR01393">
    <property type="entry name" value="lepA"/>
    <property type="match status" value="1"/>
</dbReference>
<dbReference type="NCBIfam" id="TIGR00231">
    <property type="entry name" value="small_GTP"/>
    <property type="match status" value="1"/>
</dbReference>
<dbReference type="PANTHER" id="PTHR43512:SF4">
    <property type="entry name" value="TRANSLATION FACTOR GUF1 HOMOLOG, CHLOROPLASTIC"/>
    <property type="match status" value="1"/>
</dbReference>
<dbReference type="PANTHER" id="PTHR43512">
    <property type="entry name" value="TRANSLATION FACTOR GUF1-RELATED"/>
    <property type="match status" value="1"/>
</dbReference>
<dbReference type="Pfam" id="PF00679">
    <property type="entry name" value="EFG_C"/>
    <property type="match status" value="1"/>
</dbReference>
<dbReference type="Pfam" id="PF14492">
    <property type="entry name" value="EFG_III"/>
    <property type="match status" value="1"/>
</dbReference>
<dbReference type="Pfam" id="PF00009">
    <property type="entry name" value="GTP_EFTU"/>
    <property type="match status" value="1"/>
</dbReference>
<dbReference type="Pfam" id="PF03144">
    <property type="entry name" value="GTP_EFTU_D2"/>
    <property type="match status" value="1"/>
</dbReference>
<dbReference type="Pfam" id="PF06421">
    <property type="entry name" value="LepA_C"/>
    <property type="match status" value="1"/>
</dbReference>
<dbReference type="PRINTS" id="PR00315">
    <property type="entry name" value="ELONGATNFCT"/>
</dbReference>
<dbReference type="SMART" id="SM00838">
    <property type="entry name" value="EFG_C"/>
    <property type="match status" value="1"/>
</dbReference>
<dbReference type="SUPFAM" id="SSF54980">
    <property type="entry name" value="EF-G C-terminal domain-like"/>
    <property type="match status" value="2"/>
</dbReference>
<dbReference type="SUPFAM" id="SSF52540">
    <property type="entry name" value="P-loop containing nucleoside triphosphate hydrolases"/>
    <property type="match status" value="1"/>
</dbReference>
<dbReference type="SUPFAM" id="SSF50447">
    <property type="entry name" value="Translation proteins"/>
    <property type="match status" value="1"/>
</dbReference>
<dbReference type="PROSITE" id="PS00301">
    <property type="entry name" value="G_TR_1"/>
    <property type="match status" value="1"/>
</dbReference>
<dbReference type="PROSITE" id="PS51722">
    <property type="entry name" value="G_TR_2"/>
    <property type="match status" value="1"/>
</dbReference>
<gene>
    <name evidence="1" type="primary">lepA</name>
    <name type="ordered locus">MGAS10750_Spy0927</name>
</gene>
<sequence length="605" mass="67805">MNSQDLKKRQEKIRNFSIIAHIDHGKSTLADRILEKTETVSSREMQAQLLDSMDLERERGITIKLNAIELNYTAKDGETYIFHLIDTPGHVDFTYEVSRSLAACEGAILVVDAAQGIEAQTLANVYLALDNDLEILPVINKIDLPAADPERVRHEVEDVIGLDASEAVLASAKAGIGIEEILEQIVEKVPAPTGDVDAPLQALIFDSVYDAYRGVILQVRIVNGIVKPGDKIQMMSNGKTFDVTEVGIFTPKAVGRDFLATGDVGYVAASIKTVADTRVGDTVTLANNPAKEALHGYKQMNPMVFAGIYPIESNKYNDLREALEKLQLNDASLQFEPETSQALGFGFRCGFLGLLHMDVIQERLEREFNIDLIMTAPSVVYHVHTTDEDMIEVSNPSEFPDPTRVAFIEEPYVKAQIMVPQEFVGAVMELSQRKRGDFVTMDYIDDNRVNVIYQIPLAEIVFDFFDKLKSSTRGYASFDYDMSEYRRSQLVKMDILLNGDKVDALSFIVHKEFAYERGKIIVEKLKKIIPRQQFEVPIQAAIGQKIVARSDIKALRKNVLAKCYGGDVSRKRKLLEKQKAGKKRNEGYWFCRSPSRSLLECSFNG</sequence>
<reference key="1">
    <citation type="journal article" date="2006" name="Proc. Natl. Acad. Sci. U.S.A.">
        <title>Molecular genetic anatomy of inter- and intraserotype variation in the human bacterial pathogen group A Streptococcus.</title>
        <authorList>
            <person name="Beres S.B."/>
            <person name="Richter E.W."/>
            <person name="Nagiec M.J."/>
            <person name="Sumby P."/>
            <person name="Porcella S.F."/>
            <person name="DeLeo F.R."/>
            <person name="Musser J.M."/>
        </authorList>
    </citation>
    <scope>NUCLEOTIDE SEQUENCE [LARGE SCALE GENOMIC DNA]</scope>
    <source>
        <strain>MGAS10750</strain>
    </source>
</reference>
<proteinExistence type="inferred from homology"/>
<accession>Q1J6V6</accession>
<protein>
    <recommendedName>
        <fullName evidence="1">Elongation factor 4</fullName>
        <shortName evidence="1">EF-4</shortName>
        <ecNumber evidence="1">3.6.5.n1</ecNumber>
    </recommendedName>
    <alternativeName>
        <fullName evidence="1">Ribosomal back-translocase LepA</fullName>
    </alternativeName>
</protein>
<organism>
    <name type="scientific">Streptococcus pyogenes serotype M4 (strain MGAS10750)</name>
    <dbReference type="NCBI Taxonomy" id="370554"/>
    <lineage>
        <taxon>Bacteria</taxon>
        <taxon>Bacillati</taxon>
        <taxon>Bacillota</taxon>
        <taxon>Bacilli</taxon>
        <taxon>Lactobacillales</taxon>
        <taxon>Streptococcaceae</taxon>
        <taxon>Streptococcus</taxon>
    </lineage>
</organism>
<feature type="chain" id="PRO_0000265713" description="Elongation factor 4">
    <location>
        <begin position="1"/>
        <end position="605"/>
    </location>
</feature>
<feature type="domain" description="tr-type G">
    <location>
        <begin position="11"/>
        <end position="193"/>
    </location>
</feature>
<feature type="binding site" evidence="1">
    <location>
        <begin position="23"/>
        <end position="28"/>
    </location>
    <ligand>
        <name>GTP</name>
        <dbReference type="ChEBI" id="CHEBI:37565"/>
    </ligand>
</feature>
<feature type="binding site" evidence="1">
    <location>
        <begin position="140"/>
        <end position="143"/>
    </location>
    <ligand>
        <name>GTP</name>
        <dbReference type="ChEBI" id="CHEBI:37565"/>
    </ligand>
</feature>
<name>LEPA_STRPF</name>
<comment type="function">
    <text evidence="1">Required for accurate and efficient protein synthesis under certain stress conditions. May act as a fidelity factor of the translation reaction, by catalyzing a one-codon backward translocation of tRNAs on improperly translocated ribosomes. Back-translocation proceeds from a post-translocation (POST) complex to a pre-translocation (PRE) complex, thus giving elongation factor G a second chance to translocate the tRNAs correctly. Binds to ribosomes in a GTP-dependent manner.</text>
</comment>
<comment type="catalytic activity">
    <reaction evidence="1">
        <text>GTP + H2O = GDP + phosphate + H(+)</text>
        <dbReference type="Rhea" id="RHEA:19669"/>
        <dbReference type="ChEBI" id="CHEBI:15377"/>
        <dbReference type="ChEBI" id="CHEBI:15378"/>
        <dbReference type="ChEBI" id="CHEBI:37565"/>
        <dbReference type="ChEBI" id="CHEBI:43474"/>
        <dbReference type="ChEBI" id="CHEBI:58189"/>
        <dbReference type="EC" id="3.6.5.n1"/>
    </reaction>
</comment>
<comment type="subcellular location">
    <subcellularLocation>
        <location evidence="1">Cell membrane</location>
        <topology evidence="1">Peripheral membrane protein</topology>
        <orientation evidence="1">Cytoplasmic side</orientation>
    </subcellularLocation>
</comment>
<comment type="similarity">
    <text evidence="1">Belongs to the TRAFAC class translation factor GTPase superfamily. Classic translation factor GTPase family. LepA subfamily.</text>
</comment>